<feature type="chain" id="PRO_0000066145" description="Uncharacterized protein in bfr 3'region">
    <location>
        <begin position="1"/>
        <end position="9" status="greater than"/>
    </location>
</feature>
<feature type="non-terminal residue">
    <location>
        <position position="9"/>
    </location>
</feature>
<organism>
    <name type="scientific">Azotobacter vinelandii</name>
    <dbReference type="NCBI Taxonomy" id="354"/>
    <lineage>
        <taxon>Bacteria</taxon>
        <taxon>Pseudomonadati</taxon>
        <taxon>Pseudomonadota</taxon>
        <taxon>Gammaproteobacteria</taxon>
        <taxon>Pseudomonadales</taxon>
        <taxon>Pseudomonadaceae</taxon>
        <taxon>Azotobacter</taxon>
    </lineage>
</organism>
<accession>P25825</accession>
<reference key="1">
    <citation type="journal article" date="1992" name="Proc. Natl. Acad. Sci. U.S.A.">
        <title>Unification of the ferritin family of proteins.</title>
        <authorList>
            <person name="Grossman M.J."/>
            <person name="Hinton S.M."/>
            <person name="Minak-Bernero V."/>
            <person name="Slaughter C."/>
            <person name="Stiefel E.I."/>
        </authorList>
    </citation>
    <scope>NUCLEOTIDE SEQUENCE [GENOMIC DNA]</scope>
</reference>
<protein>
    <recommendedName>
        <fullName>Uncharacterized protein in bfr 3'region</fullName>
    </recommendedName>
</protein>
<proteinExistence type="predicted"/>
<sequence>MAPPRTSTS</sequence>
<dbReference type="EMBL" id="M83692">
    <property type="protein sequence ID" value="AAA22122.1"/>
    <property type="molecule type" value="Genomic_DNA"/>
</dbReference>
<dbReference type="PIR" id="B41983">
    <property type="entry name" value="B41983"/>
</dbReference>
<name>YBFR_AZOVI</name>